<reference key="1">
    <citation type="journal article" date="2004" name="Nature">
        <title>The DNA sequence and comparative analysis of human chromosome 10.</title>
        <authorList>
            <person name="Deloukas P."/>
            <person name="Earthrowl M.E."/>
            <person name="Grafham D.V."/>
            <person name="Rubenfield M."/>
            <person name="French L."/>
            <person name="Steward C.A."/>
            <person name="Sims S.K."/>
            <person name="Jones M.C."/>
            <person name="Searle S."/>
            <person name="Scott C."/>
            <person name="Howe K."/>
            <person name="Hunt S.E."/>
            <person name="Andrews T.D."/>
            <person name="Gilbert J.G.R."/>
            <person name="Swarbreck D."/>
            <person name="Ashurst J.L."/>
            <person name="Taylor A."/>
            <person name="Battles J."/>
            <person name="Bird C.P."/>
            <person name="Ainscough R."/>
            <person name="Almeida J.P."/>
            <person name="Ashwell R.I.S."/>
            <person name="Ambrose K.D."/>
            <person name="Babbage A.K."/>
            <person name="Bagguley C.L."/>
            <person name="Bailey J."/>
            <person name="Banerjee R."/>
            <person name="Bates K."/>
            <person name="Beasley H."/>
            <person name="Bray-Allen S."/>
            <person name="Brown A.J."/>
            <person name="Brown J.Y."/>
            <person name="Burford D.C."/>
            <person name="Burrill W."/>
            <person name="Burton J."/>
            <person name="Cahill P."/>
            <person name="Camire D."/>
            <person name="Carter N.P."/>
            <person name="Chapman J.C."/>
            <person name="Clark S.Y."/>
            <person name="Clarke G."/>
            <person name="Clee C.M."/>
            <person name="Clegg S."/>
            <person name="Corby N."/>
            <person name="Coulson A."/>
            <person name="Dhami P."/>
            <person name="Dutta I."/>
            <person name="Dunn M."/>
            <person name="Faulkner L."/>
            <person name="Frankish A."/>
            <person name="Frankland J.A."/>
            <person name="Garner P."/>
            <person name="Garnett J."/>
            <person name="Gribble S."/>
            <person name="Griffiths C."/>
            <person name="Grocock R."/>
            <person name="Gustafson E."/>
            <person name="Hammond S."/>
            <person name="Harley J.L."/>
            <person name="Hart E."/>
            <person name="Heath P.D."/>
            <person name="Ho T.P."/>
            <person name="Hopkins B."/>
            <person name="Horne J."/>
            <person name="Howden P.J."/>
            <person name="Huckle E."/>
            <person name="Hynds C."/>
            <person name="Johnson C."/>
            <person name="Johnson D."/>
            <person name="Kana A."/>
            <person name="Kay M."/>
            <person name="Kimberley A.M."/>
            <person name="Kershaw J.K."/>
            <person name="Kokkinaki M."/>
            <person name="Laird G.K."/>
            <person name="Lawlor S."/>
            <person name="Lee H.M."/>
            <person name="Leongamornlert D.A."/>
            <person name="Laird G."/>
            <person name="Lloyd C."/>
            <person name="Lloyd D.M."/>
            <person name="Loveland J."/>
            <person name="Lovell J."/>
            <person name="McLaren S."/>
            <person name="McLay K.E."/>
            <person name="McMurray A."/>
            <person name="Mashreghi-Mohammadi M."/>
            <person name="Matthews L."/>
            <person name="Milne S."/>
            <person name="Nickerson T."/>
            <person name="Nguyen M."/>
            <person name="Overton-Larty E."/>
            <person name="Palmer S.A."/>
            <person name="Pearce A.V."/>
            <person name="Peck A.I."/>
            <person name="Pelan S."/>
            <person name="Phillimore B."/>
            <person name="Porter K."/>
            <person name="Rice C.M."/>
            <person name="Rogosin A."/>
            <person name="Ross M.T."/>
            <person name="Sarafidou T."/>
            <person name="Sehra H.K."/>
            <person name="Shownkeen R."/>
            <person name="Skuce C.D."/>
            <person name="Smith M."/>
            <person name="Standring L."/>
            <person name="Sycamore N."/>
            <person name="Tester J."/>
            <person name="Thorpe A."/>
            <person name="Torcasso W."/>
            <person name="Tracey A."/>
            <person name="Tromans A."/>
            <person name="Tsolas J."/>
            <person name="Wall M."/>
            <person name="Walsh J."/>
            <person name="Wang H."/>
            <person name="Weinstock K."/>
            <person name="West A.P."/>
            <person name="Willey D.L."/>
            <person name="Whitehead S.L."/>
            <person name="Wilming L."/>
            <person name="Wray P.W."/>
            <person name="Young L."/>
            <person name="Chen Y."/>
            <person name="Lovering R.C."/>
            <person name="Moschonas N.K."/>
            <person name="Siebert R."/>
            <person name="Fechtel K."/>
            <person name="Bentley D."/>
            <person name="Durbin R.M."/>
            <person name="Hubbard T."/>
            <person name="Doucette-Stamm L."/>
            <person name="Beck S."/>
            <person name="Smith D.R."/>
            <person name="Rogers J."/>
        </authorList>
    </citation>
    <scope>NUCLEOTIDE SEQUENCE [LARGE SCALE GENOMIC DNA]</scope>
</reference>
<reference key="2">
    <citation type="journal article" date="2004" name="Genome Res.">
        <title>The status, quality, and expansion of the NIH full-length cDNA project: the Mammalian Gene Collection (MGC).</title>
        <authorList>
            <consortium name="The MGC Project Team"/>
        </authorList>
    </citation>
    <scope>NUCLEOTIDE SEQUENCE [LARGE SCALE MRNA] (ISOFORM 1)</scope>
    <scope>VARIANTS CYS-89 AND GLY-98</scope>
    <source>
        <tissue>Placenta</tissue>
    </source>
</reference>
<reference key="3">
    <citation type="journal article" date="2004" name="Nat. Genet.">
        <title>Complete sequencing and characterization of 21,243 full-length human cDNAs.</title>
        <authorList>
            <person name="Ota T."/>
            <person name="Suzuki Y."/>
            <person name="Nishikawa T."/>
            <person name="Otsuki T."/>
            <person name="Sugiyama T."/>
            <person name="Irie R."/>
            <person name="Wakamatsu A."/>
            <person name="Hayashi K."/>
            <person name="Sato H."/>
            <person name="Nagai K."/>
            <person name="Kimura K."/>
            <person name="Makita H."/>
            <person name="Sekine M."/>
            <person name="Obayashi M."/>
            <person name="Nishi T."/>
            <person name="Shibahara T."/>
            <person name="Tanaka T."/>
            <person name="Ishii S."/>
            <person name="Yamamoto J."/>
            <person name="Saito K."/>
            <person name="Kawai Y."/>
            <person name="Isono Y."/>
            <person name="Nakamura Y."/>
            <person name="Nagahari K."/>
            <person name="Murakami K."/>
            <person name="Yasuda T."/>
            <person name="Iwayanagi T."/>
            <person name="Wagatsuma M."/>
            <person name="Shiratori A."/>
            <person name="Sudo H."/>
            <person name="Hosoiri T."/>
            <person name="Kaku Y."/>
            <person name="Kodaira H."/>
            <person name="Kondo H."/>
            <person name="Sugawara M."/>
            <person name="Takahashi M."/>
            <person name="Kanda K."/>
            <person name="Yokoi T."/>
            <person name="Furuya T."/>
            <person name="Kikkawa E."/>
            <person name="Omura Y."/>
            <person name="Abe K."/>
            <person name="Kamihara K."/>
            <person name="Katsuta N."/>
            <person name="Sato K."/>
            <person name="Tanikawa M."/>
            <person name="Yamazaki M."/>
            <person name="Ninomiya K."/>
            <person name="Ishibashi T."/>
            <person name="Yamashita H."/>
            <person name="Murakawa K."/>
            <person name="Fujimori K."/>
            <person name="Tanai H."/>
            <person name="Kimata M."/>
            <person name="Watanabe M."/>
            <person name="Hiraoka S."/>
            <person name="Chiba Y."/>
            <person name="Ishida S."/>
            <person name="Ono Y."/>
            <person name="Takiguchi S."/>
            <person name="Watanabe S."/>
            <person name="Yosida M."/>
            <person name="Hotuta T."/>
            <person name="Kusano J."/>
            <person name="Kanehori K."/>
            <person name="Takahashi-Fujii A."/>
            <person name="Hara H."/>
            <person name="Tanase T.-O."/>
            <person name="Nomura Y."/>
            <person name="Togiya S."/>
            <person name="Komai F."/>
            <person name="Hara R."/>
            <person name="Takeuchi K."/>
            <person name="Arita M."/>
            <person name="Imose N."/>
            <person name="Musashino K."/>
            <person name="Yuuki H."/>
            <person name="Oshima A."/>
            <person name="Sasaki N."/>
            <person name="Aotsuka S."/>
            <person name="Yoshikawa Y."/>
            <person name="Matsunawa H."/>
            <person name="Ichihara T."/>
            <person name="Shiohata N."/>
            <person name="Sano S."/>
            <person name="Moriya S."/>
            <person name="Momiyama H."/>
            <person name="Satoh N."/>
            <person name="Takami S."/>
            <person name="Terashima Y."/>
            <person name="Suzuki O."/>
            <person name="Nakagawa S."/>
            <person name="Senoh A."/>
            <person name="Mizoguchi H."/>
            <person name="Goto Y."/>
            <person name="Shimizu F."/>
            <person name="Wakebe H."/>
            <person name="Hishigaki H."/>
            <person name="Watanabe T."/>
            <person name="Sugiyama A."/>
            <person name="Takemoto M."/>
            <person name="Kawakami B."/>
            <person name="Yamazaki M."/>
            <person name="Watanabe K."/>
            <person name="Kumagai A."/>
            <person name="Itakura S."/>
            <person name="Fukuzumi Y."/>
            <person name="Fujimori Y."/>
            <person name="Komiyama M."/>
            <person name="Tashiro H."/>
            <person name="Tanigami A."/>
            <person name="Fujiwara T."/>
            <person name="Ono T."/>
            <person name="Yamada K."/>
            <person name="Fujii Y."/>
            <person name="Ozaki K."/>
            <person name="Hirao M."/>
            <person name="Ohmori Y."/>
            <person name="Kawabata A."/>
            <person name="Hikiji T."/>
            <person name="Kobatake N."/>
            <person name="Inagaki H."/>
            <person name="Ikema Y."/>
            <person name="Okamoto S."/>
            <person name="Okitani R."/>
            <person name="Kawakami T."/>
            <person name="Noguchi S."/>
            <person name="Itoh T."/>
            <person name="Shigeta K."/>
            <person name="Senba T."/>
            <person name="Matsumura K."/>
            <person name="Nakajima Y."/>
            <person name="Mizuno T."/>
            <person name="Morinaga M."/>
            <person name="Sasaki M."/>
            <person name="Togashi T."/>
            <person name="Oyama M."/>
            <person name="Hata H."/>
            <person name="Watanabe M."/>
            <person name="Komatsu T."/>
            <person name="Mizushima-Sugano J."/>
            <person name="Satoh T."/>
            <person name="Shirai Y."/>
            <person name="Takahashi Y."/>
            <person name="Nakagawa K."/>
            <person name="Okumura K."/>
            <person name="Nagase T."/>
            <person name="Nomura N."/>
            <person name="Kikuchi H."/>
            <person name="Masuho Y."/>
            <person name="Yamashita R."/>
            <person name="Nakai K."/>
            <person name="Yada T."/>
            <person name="Nakamura Y."/>
            <person name="Ohara O."/>
            <person name="Isogai T."/>
            <person name="Sugano S."/>
        </authorList>
    </citation>
    <scope>NUCLEOTIDE SEQUENCE [LARGE SCALE MRNA] OF 46-590 (ISOFORM 1)</scope>
    <scope>VARIANT CYS-89</scope>
    <source>
        <tissue>Uterus</tissue>
    </source>
</reference>
<reference key="4">
    <citation type="journal article" date="2013" name="J. Proteome Res.">
        <title>Toward a comprehensive characterization of a human cancer cell phosphoproteome.</title>
        <authorList>
            <person name="Zhou H."/>
            <person name="Di Palma S."/>
            <person name="Preisinger C."/>
            <person name="Peng M."/>
            <person name="Polat A.N."/>
            <person name="Heck A.J."/>
            <person name="Mohammed S."/>
        </authorList>
    </citation>
    <scope>PHOSPHORYLATION [LARGE SCALE ANALYSIS] AT SER-84; SER-186; SER-206; SER-250 AND SER-447</scope>
    <scope>IDENTIFICATION BY MASS SPECTROMETRY [LARGE SCALE ANALYSIS]</scope>
    <source>
        <tissue>Cervix carcinoma</tissue>
        <tissue>Erythroleukemia</tissue>
    </source>
</reference>
<reference key="5">
    <citation type="journal article" date="2018" name="Nat. Commun.">
        <title>A variant NuRD complex containing PWWP2A/B excludes MBD2/3 to regulate transcription at active genes.</title>
        <authorList>
            <person name="Zhang T."/>
            <person name="Wei G."/>
            <person name="Millard C.J."/>
            <person name="Fischer R."/>
            <person name="Konietzny R."/>
            <person name="Kessler B.M."/>
            <person name="Schwabe J.W.R."/>
            <person name="Brockdorff N."/>
        </authorList>
    </citation>
    <scope>FUNCTION</scope>
    <scope>INTERACTION WITH MTA1 AND HDAC1</scope>
    <scope>ABSENCE OF INTERACTION WITH CHD4 AND MBD3</scope>
    <scope>IDENTIFICATION IN A MTA1-SPECIFIC SUBCOMPLEX OF THE NURD COMPLEX</scope>
</reference>
<reference key="6">
    <citation type="submission" date="2013-07" db="PDB data bank">
        <title>Crystal structure of PWWP domain of human PWWP domain-containing protein 2b.</title>
        <authorList>
            <consortium name="Structural genomics consortium (SGC)"/>
        </authorList>
    </citation>
    <scope>X-RAY CRYSTALLOGRAPHY (1.7 ANGSTROMS) OF 475-590</scope>
</reference>
<evidence type="ECO:0000250" key="1">
    <source>
        <dbReference type="UniProtKB" id="Q69Z61"/>
    </source>
</evidence>
<evidence type="ECO:0000255" key="2">
    <source>
        <dbReference type="PROSITE-ProRule" id="PRU00162"/>
    </source>
</evidence>
<evidence type="ECO:0000256" key="3">
    <source>
        <dbReference type="SAM" id="MobiDB-lite"/>
    </source>
</evidence>
<evidence type="ECO:0000269" key="4">
    <source>
    </source>
</evidence>
<evidence type="ECO:0000269" key="5">
    <source>
    </source>
</evidence>
<evidence type="ECO:0000269" key="6">
    <source>
    </source>
</evidence>
<evidence type="ECO:0000305" key="7"/>
<evidence type="ECO:0007744" key="8">
    <source>
    </source>
</evidence>
<evidence type="ECO:0007829" key="9">
    <source>
        <dbReference type="PDB" id="4LD6"/>
    </source>
</evidence>
<keyword id="KW-0002">3D-structure</keyword>
<keyword id="KW-0025">Alternative splicing</keyword>
<keyword id="KW-0597">Phosphoprotein</keyword>
<keyword id="KW-1267">Proteomics identification</keyword>
<keyword id="KW-1185">Reference proteome</keyword>
<keyword id="KW-0804">Transcription</keyword>
<keyword id="KW-0805">Transcription regulation</keyword>
<sequence>MEPRAGCRLPVRVEQVVNGALVVTVSCGERSFAGILLDCTKKSGLFGLPPLAPLPQVDESPVNDSHGRAPEEGDAEVMQLGSSSPPPARGVQPPETTRPEPPPPLVPPLPAGSLPPYPPYFEGAPFPHPLWLRDTYKLWVPQPPPRTIKRTRRRLSRNRDPGRLILSTIRLRPRQVLCEKCKSTLSPPEASPGPPAAPRARRRLGSGPDRELRKPEEPENGEPTAAATARRSKRERREEDRAPAEQVPRSPVIKISYSTPQGKGEVVKIPSRVHGSLEPFRPQQAPQDDGSQDPEVLDRESRDRPSCAPSASIPKLKLTRPVPAGADLPPPKIRLKPHRLGDSEHEPVYRAELVGELNGYLRDSSPAPCADGPAGGLADLSSGSSGEDDDFKSCPQGPQGREGLAFLVSCPEGRADCASESACSSDSLDEARSSGSEGTPADTGDLSPGHGASAPSVSREARQTVPPLTVRLHTQSVSECITEDGRTVAVGDIVWGKIHGFPWWPARVLDISLGQKEDGEPSWREAKVSWFGSPTTSFLSISKLSPFSEFFKLRFNRKKKGMYRKAITEAANAARHVAPEIRELLTQFET</sequence>
<comment type="function">
    <text evidence="1 6">Chromatin-binding protein that acts as an adapter between distinct nucleosome components (H3K36me3 or H2A.Z) and chromatin-modifying complexes, contributing to the regulation of the levels of histone acetylation at actively transcribed genes (PubMed:30228260). Competes with CHD4 and MBD3 for interaction with MTA1 to form a NuRD subcomplex, preventing the formation of full NuRD complex (containing CHD4 and MBD3), leading to recruitment of HDACs to gene promoters resulting in turn in the deacetylation of nearby H3K27 and H2A.Z (PubMed:30228260). Plays a role in facilitating transcriptional elongation through regulation of histone acetylation (By similarity). Negatively regulates brown adipocyte thermogenesis by interacting with and stabilizing HDAC1 at the UCP1 gene promoter, thereby promoting histone deacetylation at the promoter leading to the repression of UCP1 expression (By similarity).</text>
</comment>
<comment type="subunit">
    <text evidence="1 6">Component of a MTA1-specific subcomplex of the NuRD complex composed of PWWP2B, MTA1 and HDAC1 but does not contain CHD4 and MBD3 (PubMed:30228260). Interacts with MTA1 and HDAC1 (PubMed:30228260). Interacts with MTA2, MTA3, HDAC2, RBBP4, RBBP7, BRCC3 and ZNF516 (By similarity). Does not interact with CHD4 and MBD3 (PubMed:30228260).</text>
</comment>
<comment type="interaction">
    <interactant intactId="EBI-10251192">
        <id>Q6NUJ5</id>
    </interactant>
    <interactant intactId="EBI-11096309">
        <id>Q9NYB9-2</id>
        <label>ABI2</label>
    </interactant>
    <organismsDiffer>false</organismsDiffer>
    <experiments>3</experiments>
</comment>
<comment type="interaction">
    <interactant intactId="EBI-10251192">
        <id>Q6NUJ5</id>
    </interactant>
    <interactant intactId="EBI-5916454">
        <id>A6NEM1</id>
        <label>GOLGA6L9</label>
    </interactant>
    <organismsDiffer>false</organismsDiffer>
    <experiments>3</experiments>
</comment>
<comment type="interaction">
    <interactant intactId="EBI-10251192">
        <id>Q6NUJ5</id>
    </interactant>
    <interactant intactId="EBI-348380">
        <id>P25788</id>
        <label>PSMA3</label>
    </interactant>
    <organismsDiffer>false</organismsDiffer>
    <experiments>3</experiments>
</comment>
<comment type="alternative products">
    <event type="alternative splicing"/>
    <isoform>
        <id>Q6NUJ5-1</id>
        <name>1</name>
        <sequence type="displayed"/>
    </isoform>
    <isoform>
        <id>Q6NUJ5-2</id>
        <name>2</name>
        <sequence type="described" ref="VSP_054223 VSP_054224"/>
    </isoform>
</comment>
<comment type="PTM">
    <text evidence="1">Deubiquitinated by BRCC3; leading to its stabilization.</text>
</comment>
<comment type="sequence caution" evidence="7">
    <conflict type="erroneous initiation">
        <sequence resource="EMBL-CDS" id="AAH68574"/>
    </conflict>
</comment>
<comment type="sequence caution" evidence="7">
    <conflict type="erroneous initiation">
        <sequence resource="EMBL" id="AK128663"/>
    </conflict>
    <text>Extended N-terminus.</text>
</comment>
<comment type="sequence caution" evidence="7">
    <conflict type="frameshift">
        <sequence resource="EMBL" id="AK128663"/>
    </conflict>
</comment>
<accession>Q6NUJ5</accession>
<accession>A6NM90</accession>
<accession>B5MDQ1</accession>
<accession>H9KV61</accession>
<accession>Q5SZI0</accession>
<accession>Q6ZQX5</accession>
<accession>Q96F43</accession>
<gene>
    <name type="primary">PWWP2B</name>
    <name type="synonym">PWWP2</name>
</gene>
<feature type="chain" id="PRO_0000240878" description="PWWP domain-containing protein 2B">
    <location>
        <begin position="1"/>
        <end position="590"/>
    </location>
</feature>
<feature type="domain" description="PWWP" evidence="2">
    <location>
        <begin position="490"/>
        <end position="550"/>
    </location>
</feature>
<feature type="region of interest" description="Disordered" evidence="3">
    <location>
        <begin position="52"/>
        <end position="110"/>
    </location>
</feature>
<feature type="region of interest" description="Disordered" evidence="3">
    <location>
        <begin position="182"/>
        <end position="347"/>
    </location>
</feature>
<feature type="region of interest" description="Disordered" evidence="3">
    <location>
        <begin position="360"/>
        <end position="398"/>
    </location>
</feature>
<feature type="region of interest" description="Disordered" evidence="3">
    <location>
        <begin position="426"/>
        <end position="467"/>
    </location>
</feature>
<feature type="compositionally biased region" description="Pro residues" evidence="3">
    <location>
        <begin position="99"/>
        <end position="110"/>
    </location>
</feature>
<feature type="compositionally biased region" description="Basic and acidic residues" evidence="3">
    <location>
        <begin position="208"/>
        <end position="217"/>
    </location>
</feature>
<feature type="compositionally biased region" description="Basic and acidic residues" evidence="3">
    <location>
        <begin position="296"/>
        <end position="305"/>
    </location>
</feature>
<feature type="compositionally biased region" description="Low complexity" evidence="3">
    <location>
        <begin position="376"/>
        <end position="385"/>
    </location>
</feature>
<feature type="modified residue" description="Phosphoserine" evidence="8">
    <location>
        <position position="84"/>
    </location>
</feature>
<feature type="modified residue" description="Phosphoserine" evidence="8">
    <location>
        <position position="186"/>
    </location>
</feature>
<feature type="modified residue" description="Phosphoserine" evidence="8">
    <location>
        <position position="206"/>
    </location>
</feature>
<feature type="modified residue" description="Phosphoserine" evidence="8">
    <location>
        <position position="250"/>
    </location>
</feature>
<feature type="modified residue" description="Phosphoserine" evidence="8">
    <location>
        <position position="447"/>
    </location>
</feature>
<feature type="splice variant" id="VSP_054223" description="In isoform 2." evidence="7">
    <original>KIH</original>
    <variation>HRR</variation>
    <location>
        <begin position="497"/>
        <end position="499"/>
    </location>
</feature>
<feature type="splice variant" id="VSP_054224" description="In isoform 2." evidence="7">
    <location>
        <begin position="500"/>
        <end position="590"/>
    </location>
</feature>
<feature type="sequence variant" id="VAR_037233" description="In dbSNP:rs11146363." evidence="4 5">
    <original>R</original>
    <variation>C</variation>
    <location>
        <position position="89"/>
    </location>
</feature>
<feature type="sequence variant" id="VAR_037234" description="In dbSNP:rs10747057." evidence="5">
    <original>R</original>
    <variation>G</variation>
    <location>
        <position position="98"/>
    </location>
</feature>
<feature type="strand" evidence="9">
    <location>
        <begin position="475"/>
        <end position="481"/>
    </location>
</feature>
<feature type="strand" evidence="9">
    <location>
        <begin position="487"/>
        <end position="489"/>
    </location>
</feature>
<feature type="strand" evidence="9">
    <location>
        <begin position="493"/>
        <end position="496"/>
    </location>
</feature>
<feature type="strand" evidence="9">
    <location>
        <begin position="504"/>
        <end position="513"/>
    </location>
</feature>
<feature type="strand" evidence="9">
    <location>
        <begin position="518"/>
        <end position="520"/>
    </location>
</feature>
<feature type="strand" evidence="9">
    <location>
        <begin position="524"/>
        <end position="530"/>
    </location>
</feature>
<feature type="strand" evidence="9">
    <location>
        <begin position="536"/>
        <end position="540"/>
    </location>
</feature>
<feature type="helix" evidence="9">
    <location>
        <begin position="541"/>
        <end position="543"/>
    </location>
</feature>
<feature type="strand" evidence="9">
    <location>
        <begin position="544"/>
        <end position="546"/>
    </location>
</feature>
<feature type="turn" evidence="9">
    <location>
        <begin position="547"/>
        <end position="550"/>
    </location>
</feature>
<feature type="helix" evidence="9">
    <location>
        <begin position="551"/>
        <end position="554"/>
    </location>
</feature>
<feature type="helix" evidence="9">
    <location>
        <begin position="562"/>
        <end position="573"/>
    </location>
</feature>
<feature type="turn" evidence="9">
    <location>
        <begin position="574"/>
        <end position="577"/>
    </location>
</feature>
<feature type="helix" evidence="9">
    <location>
        <begin position="579"/>
        <end position="588"/>
    </location>
</feature>
<dbReference type="EMBL" id="AL590105">
    <property type="status" value="NOT_ANNOTATED_CDS"/>
    <property type="molecule type" value="Genomic_DNA"/>
</dbReference>
<dbReference type="EMBL" id="BC011630">
    <property type="protein sequence ID" value="AAH11630.2"/>
    <property type="molecule type" value="mRNA"/>
</dbReference>
<dbReference type="EMBL" id="BC068574">
    <property type="protein sequence ID" value="AAH68574.1"/>
    <property type="status" value="ALT_INIT"/>
    <property type="molecule type" value="mRNA"/>
</dbReference>
<dbReference type="EMBL" id="AK128663">
    <property type="status" value="NOT_ANNOTATED_CDS"/>
    <property type="molecule type" value="mRNA"/>
</dbReference>
<dbReference type="CCDS" id="CCDS44497.1">
    <molecule id="Q6NUJ5-2"/>
</dbReference>
<dbReference type="CCDS" id="CCDS7667.2">
    <molecule id="Q6NUJ5-1"/>
</dbReference>
<dbReference type="RefSeq" id="NP_001092107.1">
    <molecule id="Q6NUJ5-2"/>
    <property type="nucleotide sequence ID" value="NM_001098637.2"/>
</dbReference>
<dbReference type="RefSeq" id="NP_612508.3">
    <molecule id="Q6NUJ5-1"/>
    <property type="nucleotide sequence ID" value="NM_138499.3"/>
</dbReference>
<dbReference type="RefSeq" id="XP_006717722.1">
    <property type="nucleotide sequence ID" value="XM_006717659.3"/>
</dbReference>
<dbReference type="PDB" id="4LD6">
    <property type="method" value="X-ray"/>
    <property type="resolution" value="1.70 A"/>
    <property type="chains" value="A=475-590"/>
</dbReference>
<dbReference type="PDBsum" id="4LD6"/>
<dbReference type="SMR" id="Q6NUJ5"/>
<dbReference type="BioGRID" id="128004">
    <property type="interactions" value="17"/>
</dbReference>
<dbReference type="FunCoup" id="Q6NUJ5">
    <property type="interactions" value="1710"/>
</dbReference>
<dbReference type="IntAct" id="Q6NUJ5">
    <property type="interactions" value="10"/>
</dbReference>
<dbReference type="STRING" id="9606.ENSP00000306324"/>
<dbReference type="GlyGen" id="Q6NUJ5">
    <property type="glycosylation" value="1 site"/>
</dbReference>
<dbReference type="iPTMnet" id="Q6NUJ5"/>
<dbReference type="PhosphoSitePlus" id="Q6NUJ5"/>
<dbReference type="BioMuta" id="PWWP2B"/>
<dbReference type="DMDM" id="160140805"/>
<dbReference type="jPOST" id="Q6NUJ5"/>
<dbReference type="MassIVE" id="Q6NUJ5"/>
<dbReference type="PaxDb" id="9606-ENSP00000306324"/>
<dbReference type="PeptideAtlas" id="Q6NUJ5"/>
<dbReference type="ProteomicsDB" id="46217"/>
<dbReference type="ProteomicsDB" id="66684">
    <molecule id="Q6NUJ5-1"/>
</dbReference>
<dbReference type="Antibodypedia" id="46422">
    <property type="antibodies" value="77 antibodies from 22 providers"/>
</dbReference>
<dbReference type="DNASU" id="170394"/>
<dbReference type="Ensembl" id="ENST00000305233.6">
    <molecule id="Q6NUJ5-1"/>
    <property type="protein sequence ID" value="ENSP00000306324.5"/>
    <property type="gene ID" value="ENSG00000171813.14"/>
</dbReference>
<dbReference type="Ensembl" id="ENST00000631148.2">
    <molecule id="Q6NUJ5-2"/>
    <property type="protein sequence ID" value="ENSP00000486501.1"/>
    <property type="gene ID" value="ENSG00000171813.14"/>
</dbReference>
<dbReference type="GeneID" id="170394"/>
<dbReference type="KEGG" id="hsa:170394"/>
<dbReference type="MANE-Select" id="ENST00000305233.6">
    <property type="protein sequence ID" value="ENSP00000306324.5"/>
    <property type="RefSeq nucleotide sequence ID" value="NM_138499.4"/>
    <property type="RefSeq protein sequence ID" value="NP_612508.3"/>
</dbReference>
<dbReference type="UCSC" id="uc001lll.5">
    <molecule id="Q6NUJ5-1"/>
    <property type="organism name" value="human"/>
</dbReference>
<dbReference type="AGR" id="HGNC:25150"/>
<dbReference type="CTD" id="170394"/>
<dbReference type="DisGeNET" id="170394"/>
<dbReference type="GeneCards" id="PWWP2B"/>
<dbReference type="HGNC" id="HGNC:25150">
    <property type="gene designation" value="PWWP2B"/>
</dbReference>
<dbReference type="HPA" id="ENSG00000171813">
    <property type="expression patterns" value="Low tissue specificity"/>
</dbReference>
<dbReference type="neXtProt" id="NX_Q6NUJ5"/>
<dbReference type="OpenTargets" id="ENSG00000171813"/>
<dbReference type="PharmGKB" id="PA162400513"/>
<dbReference type="VEuPathDB" id="HostDB:ENSG00000171813"/>
<dbReference type="eggNOG" id="ENOG502QQ5Q">
    <property type="taxonomic scope" value="Eukaryota"/>
</dbReference>
<dbReference type="GeneTree" id="ENSGT00940000160735"/>
<dbReference type="HOGENOM" id="CLU_020678_0_0_1"/>
<dbReference type="InParanoid" id="Q6NUJ5"/>
<dbReference type="OMA" id="GSIKPFC"/>
<dbReference type="OrthoDB" id="5964980at2759"/>
<dbReference type="PAN-GO" id="Q6NUJ5">
    <property type="GO annotations" value="2 GO annotations based on evolutionary models"/>
</dbReference>
<dbReference type="PhylomeDB" id="Q6NUJ5"/>
<dbReference type="TreeFam" id="TF331271"/>
<dbReference type="PathwayCommons" id="Q6NUJ5"/>
<dbReference type="SignaLink" id="Q6NUJ5"/>
<dbReference type="BioGRID-ORCS" id="170394">
    <property type="hits" value="13 hits in 1155 CRISPR screens"/>
</dbReference>
<dbReference type="ChiTaRS" id="PWWP2B">
    <property type="organism name" value="human"/>
</dbReference>
<dbReference type="EvolutionaryTrace" id="Q6NUJ5"/>
<dbReference type="GenomeRNAi" id="170394"/>
<dbReference type="Pharos" id="Q6NUJ5">
    <property type="development level" value="Tdark"/>
</dbReference>
<dbReference type="PRO" id="PR:Q6NUJ5"/>
<dbReference type="Proteomes" id="UP000005640">
    <property type="component" value="Chromosome 10"/>
</dbReference>
<dbReference type="RNAct" id="Q6NUJ5">
    <property type="molecule type" value="protein"/>
</dbReference>
<dbReference type="Bgee" id="ENSG00000171813">
    <property type="expression patterns" value="Expressed in pancreatic ductal cell and 182 other cell types or tissues"/>
</dbReference>
<dbReference type="GO" id="GO:0005654">
    <property type="term" value="C:nucleoplasm"/>
    <property type="evidence" value="ECO:0000314"/>
    <property type="project" value="HPA"/>
</dbReference>
<dbReference type="GO" id="GO:0005634">
    <property type="term" value="C:nucleus"/>
    <property type="evidence" value="ECO:0000318"/>
    <property type="project" value="GO_Central"/>
</dbReference>
<dbReference type="GO" id="GO:0120325">
    <property type="term" value="F:NuRD complex binding"/>
    <property type="evidence" value="ECO:0000314"/>
    <property type="project" value="UniProtKB"/>
</dbReference>
<dbReference type="GO" id="GO:0006338">
    <property type="term" value="P:chromatin remodeling"/>
    <property type="evidence" value="ECO:0000250"/>
    <property type="project" value="UniProtKB"/>
</dbReference>
<dbReference type="GO" id="GO:0032968">
    <property type="term" value="P:positive regulation of transcription elongation by RNA polymerase II"/>
    <property type="evidence" value="ECO:0000250"/>
    <property type="project" value="UniProtKB"/>
</dbReference>
<dbReference type="GO" id="GO:0120161">
    <property type="term" value="P:regulation of cold-induced thermogenesis"/>
    <property type="evidence" value="ECO:0000250"/>
    <property type="project" value="UniProtKB"/>
</dbReference>
<dbReference type="CDD" id="cd20153">
    <property type="entry name" value="PWWP_PWWP2B"/>
    <property type="match status" value="1"/>
</dbReference>
<dbReference type="FunFam" id="2.30.30.140:FF:000036">
    <property type="entry name" value="PWWP domain-containing protein 2A"/>
    <property type="match status" value="1"/>
</dbReference>
<dbReference type="Gene3D" id="2.30.30.140">
    <property type="match status" value="1"/>
</dbReference>
<dbReference type="InterPro" id="IPR000313">
    <property type="entry name" value="PWWP_dom"/>
</dbReference>
<dbReference type="PANTHER" id="PTHR23068">
    <property type="entry name" value="DNA CYTOSINE-5- -METHYLTRANSFERASE 3-RELATED"/>
    <property type="match status" value="1"/>
</dbReference>
<dbReference type="PANTHER" id="PTHR23068:SF6">
    <property type="entry name" value="PWWP DOMAIN-CONTAINING PROTEIN 2B"/>
    <property type="match status" value="1"/>
</dbReference>
<dbReference type="Pfam" id="PF00855">
    <property type="entry name" value="PWWP"/>
    <property type="match status" value="1"/>
</dbReference>
<dbReference type="SMART" id="SM00293">
    <property type="entry name" value="PWWP"/>
    <property type="match status" value="1"/>
</dbReference>
<dbReference type="SUPFAM" id="SSF63748">
    <property type="entry name" value="Tudor/PWWP/MBT"/>
    <property type="match status" value="1"/>
</dbReference>
<dbReference type="PROSITE" id="PS50812">
    <property type="entry name" value="PWWP"/>
    <property type="match status" value="1"/>
</dbReference>
<proteinExistence type="evidence at protein level"/>
<name>PWP2B_HUMAN</name>
<protein>
    <recommendedName>
        <fullName>PWWP domain-containing protein 2B</fullName>
    </recommendedName>
</protein>
<organism>
    <name type="scientific">Homo sapiens</name>
    <name type="common">Human</name>
    <dbReference type="NCBI Taxonomy" id="9606"/>
    <lineage>
        <taxon>Eukaryota</taxon>
        <taxon>Metazoa</taxon>
        <taxon>Chordata</taxon>
        <taxon>Craniata</taxon>
        <taxon>Vertebrata</taxon>
        <taxon>Euteleostomi</taxon>
        <taxon>Mammalia</taxon>
        <taxon>Eutheria</taxon>
        <taxon>Euarchontoglires</taxon>
        <taxon>Primates</taxon>
        <taxon>Haplorrhini</taxon>
        <taxon>Catarrhini</taxon>
        <taxon>Hominidae</taxon>
        <taxon>Homo</taxon>
    </lineage>
</organism>